<evidence type="ECO:0000250" key="1"/>
<evidence type="ECO:0000305" key="2"/>
<reference key="1">
    <citation type="journal article" date="2002" name="Nucleic Acids Res.">
        <title>The complete genomic sequence of Mycoplasma penetrans, an intracellular bacterial pathogen in humans.</title>
        <authorList>
            <person name="Sasaki Y."/>
            <person name="Ishikawa J."/>
            <person name="Yamashita A."/>
            <person name="Oshima K."/>
            <person name="Kenri T."/>
            <person name="Furuya K."/>
            <person name="Yoshino C."/>
            <person name="Horino A."/>
            <person name="Shiba T."/>
            <person name="Sasaki T."/>
            <person name="Hattori M."/>
        </authorList>
    </citation>
    <scope>NUCLEOTIDE SEQUENCE [LARGE SCALE GENOMIC DNA]</scope>
    <source>
        <strain>HF-2</strain>
    </source>
</reference>
<sequence length="306" mass="32909">MKNNNRLKINLPGFELKNPIMPASGCFGFGKEFSELYDLSRLGAIIIKAATKNEKFGNPTPRVAETSSGMLNAIGLQNPGVDHIINHELKELEKYDVPIIANVAGDDIDDYVYVAKRISQAKNVVALELNISCPNVKNGGIQFGTDCNVAYNLTKKVKKVSSKPVYVKLSPNVSDIVGMAKAIEEAKADGLSLINTLIGMALDPKSGKPILANKTGGLSGPAIKPVAIRMIYQVSQAVNIPIIGMGGISNVQDVIDFISAGASAVAIGTANFINPYICVEIIDQLESKLDELNVNHIWDLKGRSYR</sequence>
<proteinExistence type="inferred from homology"/>
<keyword id="KW-0963">Cytoplasm</keyword>
<keyword id="KW-0285">Flavoprotein</keyword>
<keyword id="KW-0288">FMN</keyword>
<keyword id="KW-0520">NAD</keyword>
<keyword id="KW-0560">Oxidoreductase</keyword>
<keyword id="KW-0665">Pyrimidine biosynthesis</keyword>
<keyword id="KW-1185">Reference proteome</keyword>
<protein>
    <recommendedName>
        <fullName>Dihydroorotate dehydrogenase B (NAD(+)), catalytic subunit</fullName>
        <shortName>DHOD B</shortName>
        <shortName>DHODase B</shortName>
        <shortName>DHOdehase B</shortName>
        <ecNumber>1.3.1.14</ecNumber>
    </recommendedName>
    <alternativeName>
        <fullName>Dihydroorotate oxidase B</fullName>
    </alternativeName>
    <alternativeName>
        <fullName>Orotate reductase (NADH)</fullName>
    </alternativeName>
</protein>
<gene>
    <name type="primary">pyrD</name>
    <name type="ordered locus">MYPE7860</name>
</gene>
<dbReference type="EC" id="1.3.1.14"/>
<dbReference type="EMBL" id="BA000026">
    <property type="protein sequence ID" value="BAC44579.1"/>
    <property type="molecule type" value="Genomic_DNA"/>
</dbReference>
<dbReference type="RefSeq" id="WP_011077608.1">
    <property type="nucleotide sequence ID" value="NC_004432.1"/>
</dbReference>
<dbReference type="SMR" id="Q8EUY2"/>
<dbReference type="FunCoup" id="Q8EUY2">
    <property type="interactions" value="252"/>
</dbReference>
<dbReference type="STRING" id="272633.gene:10731908"/>
<dbReference type="KEGG" id="mpe:MYPE7860"/>
<dbReference type="eggNOG" id="COG0167">
    <property type="taxonomic scope" value="Bacteria"/>
</dbReference>
<dbReference type="HOGENOM" id="CLU_042042_0_0_14"/>
<dbReference type="InParanoid" id="Q8EUY2"/>
<dbReference type="UniPathway" id="UPA00070">
    <property type="reaction ID" value="UER00945"/>
</dbReference>
<dbReference type="Proteomes" id="UP000002522">
    <property type="component" value="Chromosome"/>
</dbReference>
<dbReference type="GO" id="GO:0005737">
    <property type="term" value="C:cytoplasm"/>
    <property type="evidence" value="ECO:0007669"/>
    <property type="project" value="UniProtKB-SubCell"/>
</dbReference>
<dbReference type="GO" id="GO:0004589">
    <property type="term" value="F:dihydroorotate dehydrogenase (NAD+) activity"/>
    <property type="evidence" value="ECO:0007669"/>
    <property type="project" value="UniProtKB-EC"/>
</dbReference>
<dbReference type="GO" id="GO:0006207">
    <property type="term" value="P:'de novo' pyrimidine nucleobase biosynthetic process"/>
    <property type="evidence" value="ECO:0007669"/>
    <property type="project" value="InterPro"/>
</dbReference>
<dbReference type="GO" id="GO:0044205">
    <property type="term" value="P:'de novo' UMP biosynthetic process"/>
    <property type="evidence" value="ECO:0007669"/>
    <property type="project" value="UniProtKB-UniRule"/>
</dbReference>
<dbReference type="CDD" id="cd04740">
    <property type="entry name" value="DHOD_1B_like"/>
    <property type="match status" value="1"/>
</dbReference>
<dbReference type="FunFam" id="3.20.20.70:FF:000069">
    <property type="entry name" value="Dihydroorotate dehydrogenase"/>
    <property type="match status" value="1"/>
</dbReference>
<dbReference type="Gene3D" id="3.20.20.70">
    <property type="entry name" value="Aldolase class I"/>
    <property type="match status" value="1"/>
</dbReference>
<dbReference type="HAMAP" id="MF_00224">
    <property type="entry name" value="DHO_dh_type1"/>
    <property type="match status" value="1"/>
</dbReference>
<dbReference type="InterPro" id="IPR013785">
    <property type="entry name" value="Aldolase_TIM"/>
</dbReference>
<dbReference type="InterPro" id="IPR050074">
    <property type="entry name" value="DHO_dehydrogenase"/>
</dbReference>
<dbReference type="InterPro" id="IPR033888">
    <property type="entry name" value="DHOD_1B"/>
</dbReference>
<dbReference type="InterPro" id="IPR024920">
    <property type="entry name" value="Dihydroorotate_DH_1"/>
</dbReference>
<dbReference type="InterPro" id="IPR012135">
    <property type="entry name" value="Dihydroorotate_DH_1_2"/>
</dbReference>
<dbReference type="InterPro" id="IPR005720">
    <property type="entry name" value="Dihydroorotate_DH_cat"/>
</dbReference>
<dbReference type="InterPro" id="IPR001295">
    <property type="entry name" value="Dihydroorotate_DH_CS"/>
</dbReference>
<dbReference type="InterPro" id="IPR049622">
    <property type="entry name" value="Dihydroorotate_DH_I"/>
</dbReference>
<dbReference type="NCBIfam" id="NF005574">
    <property type="entry name" value="PRK07259.1"/>
    <property type="match status" value="1"/>
</dbReference>
<dbReference type="NCBIfam" id="TIGR01037">
    <property type="entry name" value="pyrD_sub1_fam"/>
    <property type="match status" value="1"/>
</dbReference>
<dbReference type="PANTHER" id="PTHR48109:SF1">
    <property type="entry name" value="DIHYDROOROTATE DEHYDROGENASE (FUMARATE)"/>
    <property type="match status" value="1"/>
</dbReference>
<dbReference type="PANTHER" id="PTHR48109">
    <property type="entry name" value="DIHYDROOROTATE DEHYDROGENASE (QUINONE), MITOCHONDRIAL-RELATED"/>
    <property type="match status" value="1"/>
</dbReference>
<dbReference type="Pfam" id="PF01180">
    <property type="entry name" value="DHO_dh"/>
    <property type="match status" value="1"/>
</dbReference>
<dbReference type="PIRSF" id="PIRSF000164">
    <property type="entry name" value="DHO_oxidase"/>
    <property type="match status" value="1"/>
</dbReference>
<dbReference type="SUPFAM" id="SSF51395">
    <property type="entry name" value="FMN-linked oxidoreductases"/>
    <property type="match status" value="1"/>
</dbReference>
<dbReference type="PROSITE" id="PS00911">
    <property type="entry name" value="DHODEHASE_1"/>
    <property type="match status" value="1"/>
</dbReference>
<dbReference type="PROSITE" id="PS00912">
    <property type="entry name" value="DHODEHASE_2"/>
    <property type="match status" value="1"/>
</dbReference>
<accession>Q8EUY2</accession>
<organism>
    <name type="scientific">Malacoplasma penetrans (strain HF-2)</name>
    <name type="common">Mycoplasma penetrans</name>
    <dbReference type="NCBI Taxonomy" id="272633"/>
    <lineage>
        <taxon>Bacteria</taxon>
        <taxon>Bacillati</taxon>
        <taxon>Mycoplasmatota</taxon>
        <taxon>Mycoplasmoidales</taxon>
        <taxon>Mycoplasmoidaceae</taxon>
        <taxon>Malacoplasma</taxon>
    </lineage>
</organism>
<comment type="function">
    <text evidence="1">Catalyzes the conversion of dihydroorotate to orotate with NAD(+) as electron acceptor.</text>
</comment>
<comment type="catalytic activity">
    <reaction>
        <text>(S)-dihydroorotate + NAD(+) = orotate + NADH + H(+)</text>
        <dbReference type="Rhea" id="RHEA:13513"/>
        <dbReference type="ChEBI" id="CHEBI:15378"/>
        <dbReference type="ChEBI" id="CHEBI:30839"/>
        <dbReference type="ChEBI" id="CHEBI:30864"/>
        <dbReference type="ChEBI" id="CHEBI:57540"/>
        <dbReference type="ChEBI" id="CHEBI:57945"/>
        <dbReference type="EC" id="1.3.1.14"/>
    </reaction>
</comment>
<comment type="cofactor">
    <cofactor evidence="1">
        <name>FMN</name>
        <dbReference type="ChEBI" id="CHEBI:58210"/>
    </cofactor>
    <text evidence="1">Binds 1 FMN per subunit.</text>
</comment>
<comment type="pathway">
    <text>Pyrimidine metabolism; UMP biosynthesis via de novo pathway; orotate from (S)-dihydroorotate (NAD(+) route): step 1/1.</text>
</comment>
<comment type="subunit">
    <text evidence="1">Heterotetramer of 2 PyrK and 2 PyrD type B subunits.</text>
</comment>
<comment type="subcellular location">
    <subcellularLocation>
        <location evidence="1">Cytoplasm</location>
    </subcellularLocation>
</comment>
<comment type="similarity">
    <text evidence="2">Belongs to the dihydroorotate dehydrogenase family. Type 1 subfamily.</text>
</comment>
<feature type="chain" id="PRO_0000336450" description="Dihydroorotate dehydrogenase B (NAD(+)), catalytic subunit">
    <location>
        <begin position="1"/>
        <end position="306"/>
    </location>
</feature>
<feature type="active site" description="Nucleophile">
    <location>
        <position position="133"/>
    </location>
</feature>
<feature type="binding site" evidence="1">
    <location>
        <position position="24"/>
    </location>
    <ligand>
        <name>FMN</name>
        <dbReference type="ChEBI" id="CHEBI:58210"/>
    </ligand>
</feature>
<feature type="binding site" evidence="1">
    <location>
        <begin position="48"/>
        <end position="49"/>
    </location>
    <ligand>
        <name>FMN</name>
        <dbReference type="ChEBI" id="CHEBI:58210"/>
    </ligand>
</feature>
<feature type="binding site" evidence="1">
    <location>
        <position position="48"/>
    </location>
    <ligand>
        <name>substrate</name>
    </ligand>
</feature>
<feature type="binding site" evidence="1">
    <location>
        <begin position="72"/>
        <end position="76"/>
    </location>
    <ligand>
        <name>substrate</name>
    </ligand>
</feature>
<feature type="binding site" evidence="1">
    <location>
        <position position="102"/>
    </location>
    <ligand>
        <name>FMN</name>
        <dbReference type="ChEBI" id="CHEBI:58210"/>
    </ligand>
</feature>
<feature type="binding site" evidence="1">
    <location>
        <position position="130"/>
    </location>
    <ligand>
        <name>FMN</name>
        <dbReference type="ChEBI" id="CHEBI:58210"/>
    </ligand>
</feature>
<feature type="binding site" evidence="1">
    <location>
        <position position="130"/>
    </location>
    <ligand>
        <name>substrate</name>
    </ligand>
</feature>
<feature type="binding site" evidence="1">
    <location>
        <position position="168"/>
    </location>
    <ligand>
        <name>FMN</name>
        <dbReference type="ChEBI" id="CHEBI:58210"/>
    </ligand>
</feature>
<feature type="binding site" evidence="1">
    <location>
        <position position="194"/>
    </location>
    <ligand>
        <name>FMN</name>
        <dbReference type="ChEBI" id="CHEBI:58210"/>
    </ligand>
</feature>
<feature type="binding site" evidence="1">
    <location>
        <begin position="195"/>
        <end position="196"/>
    </location>
    <ligand>
        <name>substrate</name>
    </ligand>
</feature>
<feature type="binding site" evidence="1">
    <location>
        <position position="220"/>
    </location>
    <ligand>
        <name>FMN</name>
        <dbReference type="ChEBI" id="CHEBI:58210"/>
    </ligand>
</feature>
<feature type="binding site" evidence="1">
    <location>
        <begin position="246"/>
        <end position="247"/>
    </location>
    <ligand>
        <name>FMN</name>
        <dbReference type="ChEBI" id="CHEBI:58210"/>
    </ligand>
</feature>
<feature type="binding site" evidence="1">
    <location>
        <begin position="268"/>
        <end position="269"/>
    </location>
    <ligand>
        <name>FMN</name>
        <dbReference type="ChEBI" id="CHEBI:58210"/>
    </ligand>
</feature>
<name>PYRDB_MALP2</name>